<feature type="signal peptide" evidence="1">
    <location>
        <begin position="1"/>
        <end position="23"/>
    </location>
</feature>
<feature type="peptide" id="PRO_0000461911" description="Peptide Smp13" evidence="5">
    <location>
        <begin position="24"/>
        <end position="36"/>
    </location>
</feature>
<feature type="propeptide" id="PRO_0000461912" evidence="5">
    <location>
        <begin position="37"/>
        <end position="68"/>
    </location>
</feature>
<feature type="modified residue" description="Phenylalanine amide" evidence="5">
    <location>
        <position position="36"/>
    </location>
</feature>
<reference evidence="6 7 8 9 10 11" key="1">
    <citation type="journal article" date="2013" name="Toxicon">
        <title>Venom proteomic and venomous glands transcriptomic analysis of the Egyptian scorpion Scorpio maurus palmatus (Arachnida: Scorpionidae).</title>
        <authorList>
            <person name="Abdel-Rahman M.A."/>
            <person name="Quintero-Hernandez V."/>
            <person name="Possani L.D."/>
        </authorList>
    </citation>
    <scope>NUCLEOTIDE SEQUENCE [MRNA]</scope>
    <scope>PROBABLE AMIDATION AT PHE-36</scope>
    <source>
        <tissue>Venom gland</tissue>
    </source>
</reference>
<reference key="2">
    <citation type="journal article" date="2016" name="Toxicon">
        <title>Characterisation of three alpha-helical antimicrobial peptides from the venom of Scorpio maurus palmatus.</title>
        <authorList>
            <person name="Harrison P.L."/>
            <person name="Abdel-Rahman M.A."/>
            <person name="Strong P.N."/>
            <person name="Tawfik M.M."/>
            <person name="Miller K."/>
        </authorList>
    </citation>
    <scope>SYNTHESIS OF 24-36</scope>
</reference>
<protein>
    <recommendedName>
        <fullName evidence="3">Peptide Smp13</fullName>
    </recommendedName>
</protein>
<proteinExistence type="evidence at protein level"/>
<dbReference type="EMBL" id="JZ469095">
    <property type="status" value="NOT_ANNOTATED_CDS"/>
    <property type="molecule type" value="mRNA"/>
</dbReference>
<dbReference type="EMBL" id="JZ469100">
    <property type="status" value="NOT_ANNOTATED_CDS"/>
    <property type="molecule type" value="mRNA"/>
</dbReference>
<dbReference type="EMBL" id="JZ469101">
    <property type="status" value="NOT_ANNOTATED_CDS"/>
    <property type="molecule type" value="mRNA"/>
</dbReference>
<dbReference type="EMBL" id="JZ469102">
    <property type="status" value="NOT_ANNOTATED_CDS"/>
    <property type="molecule type" value="mRNA"/>
</dbReference>
<dbReference type="EMBL" id="JZ469103">
    <property type="status" value="NOT_ANNOTATED_CDS"/>
    <property type="molecule type" value="mRNA"/>
</dbReference>
<dbReference type="EMBL" id="JZ469105">
    <property type="status" value="NOT_ANNOTATED_CDS"/>
    <property type="molecule type" value="mRNA"/>
</dbReference>
<keyword id="KW-0027">Amidation</keyword>
<keyword id="KW-0044">Antibiotic</keyword>
<keyword id="KW-0929">Antimicrobial</keyword>
<keyword id="KW-0964">Secreted</keyword>
<keyword id="KW-0732">Signal</keyword>
<organism>
    <name type="scientific">Scorpio palmatus</name>
    <name type="common">Israeli golden scorpion</name>
    <name type="synonym">Scorpio maurus palmatus</name>
    <dbReference type="NCBI Taxonomy" id="1662106"/>
    <lineage>
        <taxon>Eukaryota</taxon>
        <taxon>Metazoa</taxon>
        <taxon>Ecdysozoa</taxon>
        <taxon>Arthropoda</taxon>
        <taxon>Chelicerata</taxon>
        <taxon>Arachnida</taxon>
        <taxon>Scorpiones</taxon>
        <taxon>Iurida</taxon>
        <taxon>Scorpionoidea</taxon>
        <taxon>Scorpionidae</taxon>
        <taxon>Scorpioninae</taxon>
        <taxon>Scorpio</taxon>
    </lineage>
</organism>
<comment type="function">
    <text evidence="2">Peptide with unknown function. Does not show antimicrobial activity against the Gram-positive, and Gram-negative bacteria tested, as well as against the fungus C.albicans.</text>
</comment>
<comment type="subcellular location">
    <subcellularLocation>
        <location evidence="5">Secreted</location>
    </subcellularLocation>
</comment>
<comment type="tissue specificity">
    <text evidence="5">Expressed by the venom gland.</text>
</comment>
<comment type="similarity">
    <text evidence="4">Belongs to the non-disulfide-bridged peptide (NDBP) superfamily. Short antimicrobial peptide (group 4) family.</text>
</comment>
<name>NDB43_SCOPA</name>
<sequence length="68" mass="7839">MKTQFAIFLITLVLFQMFSQSDAILQDIWNGIKNLFGKRGLGDHDDLDELFDGEISQADIDFLKEIMQ</sequence>
<accession>P0DY17</accession>
<evidence type="ECO:0000255" key="1"/>
<evidence type="ECO:0000269" key="2">
    <source>
    </source>
</evidence>
<evidence type="ECO:0000303" key="3">
    <source>
    </source>
</evidence>
<evidence type="ECO:0000305" key="4"/>
<evidence type="ECO:0000305" key="5">
    <source>
    </source>
</evidence>
<evidence type="ECO:0000312" key="6">
    <source>
        <dbReference type="EMBL" id="JZ469095"/>
    </source>
</evidence>
<evidence type="ECO:0000312" key="7">
    <source>
        <dbReference type="EMBL" id="JZ469100"/>
    </source>
</evidence>
<evidence type="ECO:0000312" key="8">
    <source>
        <dbReference type="EMBL" id="JZ469101"/>
    </source>
</evidence>
<evidence type="ECO:0000312" key="9">
    <source>
        <dbReference type="EMBL" id="JZ469102"/>
    </source>
</evidence>
<evidence type="ECO:0000312" key="10">
    <source>
        <dbReference type="EMBL" id="JZ469103"/>
    </source>
</evidence>
<evidence type="ECO:0000312" key="11">
    <source>
        <dbReference type="EMBL" id="JZ469105"/>
    </source>
</evidence>